<evidence type="ECO:0000250" key="1"/>
<evidence type="ECO:0000255" key="2">
    <source>
        <dbReference type="PROSITE-ProRule" id="PRU10110"/>
    </source>
</evidence>
<evidence type="ECO:0000256" key="3">
    <source>
        <dbReference type="SAM" id="MobiDB-lite"/>
    </source>
</evidence>
<evidence type="ECO:0000305" key="4"/>
<keyword id="KW-0210">Decarboxylase</keyword>
<keyword id="KW-0456">Lyase</keyword>
<keyword id="KW-0665">Pyrimidine biosynthesis</keyword>
<proteinExistence type="inferred from homology"/>
<protein>
    <recommendedName>
        <fullName>Orotidine 5'-phosphate decarboxylase</fullName>
        <ecNumber>4.1.1.23</ecNumber>
    </recommendedName>
    <alternativeName>
        <fullName>OMP decarboxylase</fullName>
        <shortName>OMPDCase</shortName>
        <shortName>OMPdecase</shortName>
    </alternativeName>
    <alternativeName>
        <fullName>Uridine 5'-monophosphate synthase</fullName>
        <shortName>UMP synthase</shortName>
    </alternativeName>
</protein>
<feature type="chain" id="PRO_0000134687" description="Orotidine 5'-phosphate decarboxylase">
    <location>
        <begin position="1"/>
        <end position="379"/>
    </location>
</feature>
<feature type="region of interest" description="Disordered" evidence="3">
    <location>
        <begin position="165"/>
        <end position="198"/>
    </location>
</feature>
<feature type="compositionally biased region" description="Acidic residues" evidence="3">
    <location>
        <begin position="169"/>
        <end position="178"/>
    </location>
</feature>
<feature type="active site" description="Proton donor" evidence="2">
    <location>
        <position position="101"/>
    </location>
</feature>
<feature type="binding site" evidence="1">
    <location>
        <position position="42"/>
    </location>
    <ligand>
        <name>substrate</name>
    </ligand>
</feature>
<feature type="binding site" evidence="1">
    <location>
        <begin position="64"/>
        <end position="66"/>
    </location>
    <ligand>
        <name>substrate</name>
    </ligand>
</feature>
<feature type="binding site" evidence="1">
    <location>
        <begin position="99"/>
        <end position="108"/>
    </location>
    <ligand>
        <name>substrate</name>
    </ligand>
</feature>
<feature type="binding site" evidence="1">
    <location>
        <position position="331"/>
    </location>
    <ligand>
        <name>substrate</name>
    </ligand>
</feature>
<feature type="binding site" evidence="1">
    <location>
        <position position="350"/>
    </location>
    <ligand>
        <name>substrate</name>
    </ligand>
</feature>
<organism>
    <name type="scientific">Hypocrea atroviridis</name>
    <name type="common">Trichoderma atroviride</name>
    <dbReference type="NCBI Taxonomy" id="63577"/>
    <lineage>
        <taxon>Eukaryota</taxon>
        <taxon>Fungi</taxon>
        <taxon>Dikarya</taxon>
        <taxon>Ascomycota</taxon>
        <taxon>Pezizomycotina</taxon>
        <taxon>Sordariomycetes</taxon>
        <taxon>Hypocreomycetidae</taxon>
        <taxon>Hypocreales</taxon>
        <taxon>Hypocreaceae</taxon>
        <taxon>Trichoderma</taxon>
    </lineage>
</organism>
<comment type="catalytic activity">
    <reaction evidence="2">
        <text>orotidine 5'-phosphate + H(+) = UMP + CO2</text>
        <dbReference type="Rhea" id="RHEA:11596"/>
        <dbReference type="ChEBI" id="CHEBI:15378"/>
        <dbReference type="ChEBI" id="CHEBI:16526"/>
        <dbReference type="ChEBI" id="CHEBI:57538"/>
        <dbReference type="ChEBI" id="CHEBI:57865"/>
        <dbReference type="EC" id="4.1.1.23"/>
    </reaction>
</comment>
<comment type="pathway">
    <text>Pyrimidine metabolism; UMP biosynthesis via de novo pathway; UMP from orotate: step 2/2.</text>
</comment>
<comment type="similarity">
    <text evidence="4">Belongs to the OMP decarboxylase family.</text>
</comment>
<sequence>MASHPTLKTTFAARSEATTHPLTSYLLRLMDLKASNLCLSADVPTARELLYLADKIGPSIVVLKTHYDMVSGWDFHPDTGTGAKLASLARKHGFLIFEDRKFGDIGHTVELQYTSGSARIIDWAHIVNVNMVPGKASVASLAQGARRWLERYPCEVKTSVTVGTPTMDQFDDAEDAKDDEPATVNDNGSNMMEKPIYAGRNGDGRKGSIVSITTVTQQYESAASPRLGKTIAEGDESLFPGIEEAPLNRGLLILAQMSSEGNFMTGEYTQACVEAAREHKDFVMGFISQEALNTQADDDFIHMTPGCQLPPEDEDQQTNGKVGGDGQGQQYNTAHKIIGIAGSDIAIVGRGILKASDPVEEAERYRSAAWKAYTERLLR</sequence>
<reference key="1">
    <citation type="journal article" date="1994" name="Gene">
        <title>Sequence of the pyr4 gene encoding orotidine-5'-phosphate decarboxylase from the biocontrol fungus Trichoderma harzianum.</title>
        <authorList>
            <person name="Heidenreich E.J."/>
            <person name="Kubicek C.P."/>
        </authorList>
    </citation>
    <scope>NUCLEOTIDE SEQUENCE [GENOMIC DNA]</scope>
    <source>
        <strain>ATCC 36042 / 2440A / CBS 391.92</strain>
    </source>
</reference>
<dbReference type="EC" id="4.1.1.23"/>
<dbReference type="EMBL" id="U05192">
    <property type="protein sequence ID" value="AAA51865.1"/>
    <property type="molecule type" value="Genomic_DNA"/>
</dbReference>
<dbReference type="SMR" id="Q12709"/>
<dbReference type="UniPathway" id="UPA00070">
    <property type="reaction ID" value="UER00120"/>
</dbReference>
<dbReference type="GO" id="GO:0005829">
    <property type="term" value="C:cytosol"/>
    <property type="evidence" value="ECO:0007669"/>
    <property type="project" value="TreeGrafter"/>
</dbReference>
<dbReference type="GO" id="GO:0004590">
    <property type="term" value="F:orotidine-5'-phosphate decarboxylase activity"/>
    <property type="evidence" value="ECO:0007669"/>
    <property type="project" value="UniProtKB-EC"/>
</dbReference>
<dbReference type="GO" id="GO:0006207">
    <property type="term" value="P:'de novo' pyrimidine nucleobase biosynthetic process"/>
    <property type="evidence" value="ECO:0007669"/>
    <property type="project" value="InterPro"/>
</dbReference>
<dbReference type="GO" id="GO:0044205">
    <property type="term" value="P:'de novo' UMP biosynthetic process"/>
    <property type="evidence" value="ECO:0007669"/>
    <property type="project" value="UniProtKB-UniPathway"/>
</dbReference>
<dbReference type="CDD" id="cd04725">
    <property type="entry name" value="OMP_decarboxylase_like"/>
    <property type="match status" value="1"/>
</dbReference>
<dbReference type="Gene3D" id="3.20.20.70">
    <property type="entry name" value="Aldolase class I"/>
    <property type="match status" value="1"/>
</dbReference>
<dbReference type="InterPro" id="IPR013785">
    <property type="entry name" value="Aldolase_TIM"/>
</dbReference>
<dbReference type="InterPro" id="IPR014732">
    <property type="entry name" value="OMPdecase"/>
</dbReference>
<dbReference type="InterPro" id="IPR018089">
    <property type="entry name" value="OMPdecase_AS"/>
</dbReference>
<dbReference type="InterPro" id="IPR001754">
    <property type="entry name" value="OMPdeCOase_dom"/>
</dbReference>
<dbReference type="InterPro" id="IPR011060">
    <property type="entry name" value="RibuloseP-bd_barrel"/>
</dbReference>
<dbReference type="PANTHER" id="PTHR32119">
    <property type="entry name" value="OROTIDINE 5'-PHOSPHATE DECARBOXYLASE"/>
    <property type="match status" value="1"/>
</dbReference>
<dbReference type="PANTHER" id="PTHR32119:SF2">
    <property type="entry name" value="OROTIDINE 5'-PHOSPHATE DECARBOXYLASE"/>
    <property type="match status" value="1"/>
</dbReference>
<dbReference type="Pfam" id="PF00215">
    <property type="entry name" value="OMPdecase"/>
    <property type="match status" value="1"/>
</dbReference>
<dbReference type="SMART" id="SM00934">
    <property type="entry name" value="OMPdecase"/>
    <property type="match status" value="1"/>
</dbReference>
<dbReference type="SUPFAM" id="SSF51366">
    <property type="entry name" value="Ribulose-phoshate binding barrel"/>
    <property type="match status" value="1"/>
</dbReference>
<dbReference type="PROSITE" id="PS00156">
    <property type="entry name" value="OMPDECASE"/>
    <property type="match status" value="1"/>
</dbReference>
<name>PYRF_HYPAT</name>
<gene>
    <name type="primary">pyr4</name>
</gene>
<accession>Q12709</accession>